<organism>
    <name type="scientific">Mus musculus</name>
    <name type="common">Mouse</name>
    <dbReference type="NCBI Taxonomy" id="10090"/>
    <lineage>
        <taxon>Eukaryota</taxon>
        <taxon>Metazoa</taxon>
        <taxon>Chordata</taxon>
        <taxon>Craniata</taxon>
        <taxon>Vertebrata</taxon>
        <taxon>Euteleostomi</taxon>
        <taxon>Mammalia</taxon>
        <taxon>Eutheria</taxon>
        <taxon>Euarchontoglires</taxon>
        <taxon>Glires</taxon>
        <taxon>Rodentia</taxon>
        <taxon>Myomorpha</taxon>
        <taxon>Muroidea</taxon>
        <taxon>Muridae</taxon>
        <taxon>Murinae</taxon>
        <taxon>Mus</taxon>
        <taxon>Mus</taxon>
    </lineage>
</organism>
<accession>Q9R016</accession>
<accession>O09121</accession>
<accession>O09122</accession>
<accession>P81703</accession>
<accession>Q8CGT2</accession>
<accession>Q9R029</accession>
<feature type="chain" id="PRO_0000122344" description="Baculoviral IAP repeat-containing protein 1e">
    <location>
        <begin position="1"/>
        <end position="1403"/>
    </location>
</feature>
<feature type="repeat" description="BIR 1">
    <location>
        <begin position="60"/>
        <end position="127"/>
    </location>
</feature>
<feature type="repeat" description="BIR 2">
    <location>
        <begin position="159"/>
        <end position="227"/>
    </location>
</feature>
<feature type="repeat" description="BIR 3">
    <location>
        <begin position="278"/>
        <end position="345"/>
    </location>
</feature>
<feature type="domain" description="NACHT" evidence="3">
    <location>
        <begin position="464"/>
        <end position="759"/>
    </location>
</feature>
<feature type="binding site" evidence="2">
    <location>
        <position position="315"/>
    </location>
    <ligand>
        <name>Zn(2+)</name>
        <dbReference type="ChEBI" id="CHEBI:29105"/>
    </ligand>
</feature>
<feature type="binding site" evidence="2">
    <location>
        <position position="318"/>
    </location>
    <ligand>
        <name>Zn(2+)</name>
        <dbReference type="ChEBI" id="CHEBI:29105"/>
    </ligand>
</feature>
<feature type="binding site" evidence="2">
    <location>
        <position position="335"/>
    </location>
    <ligand>
        <name>Zn(2+)</name>
        <dbReference type="ChEBI" id="CHEBI:29105"/>
    </ligand>
</feature>
<feature type="binding site" evidence="2">
    <location>
        <position position="342"/>
    </location>
    <ligand>
        <name>Zn(2+)</name>
        <dbReference type="ChEBI" id="CHEBI:29105"/>
    </ligand>
</feature>
<feature type="binding site" evidence="12 15">
    <location>
        <begin position="473"/>
        <end position="478"/>
    </location>
    <ligand>
        <name>ATP</name>
        <dbReference type="ChEBI" id="CHEBI:30616"/>
    </ligand>
</feature>
<feature type="mutagenesis site" description="Abolishes production of IL1B in response to bacterial flagellin." evidence="8">
    <location>
        <begin position="1"/>
        <end position="40"/>
    </location>
</feature>
<feature type="mutagenesis site" description="Strongly reduces production of IL1B in response to bacterial flagellin; then associated with F-15." evidence="8">
    <original>R</original>
    <variation>I</variation>
    <location>
        <position position="11"/>
    </location>
</feature>
<feature type="mutagenesis site" description="Strongly reduces production of IL1B in response to bacterial flagellin; then associated with I-11." evidence="8">
    <original>I</original>
    <variation>F</variation>
    <location>
        <position position="15"/>
    </location>
</feature>
<feature type="mutagenesis site" description="Strongly reduces production of IL1B in response to bacterial flagellin." evidence="8">
    <original>GNS</original>
    <variation>STR</variation>
    <location>
        <begin position="106"/>
        <end position="108"/>
    </location>
</feature>
<feature type="mutagenesis site" description="Strongly reduced interaction with flagellin." evidence="7">
    <original>II</original>
    <variation>AA</variation>
    <location>
        <begin position="626"/>
        <end position="627"/>
    </location>
</feature>
<feature type="mutagenesis site" description="Mildly reduced interaction with flagellin." evidence="7">
    <original>QT</original>
    <variation>AA</variation>
    <location>
        <begin position="837"/>
        <end position="838"/>
    </location>
</feature>
<feature type="mutagenesis site" description="Mildly reduced interaction with flagellin." evidence="7">
    <original>FL</original>
    <variation>AA</variation>
    <location>
        <begin position="839"/>
        <end position="840"/>
    </location>
</feature>
<feature type="mutagenesis site" description="Strongly reduces production of IL1B in response to bacterial flagellin." evidence="8">
    <original>L</original>
    <variation>R</variation>
    <location>
        <position position="840"/>
    </location>
</feature>
<feature type="mutagenesis site" description="Mildly reduced interaction with flagellin." evidence="7">
    <original>WF</original>
    <variation>AA</variation>
    <location>
        <begin position="841"/>
        <end position="842"/>
    </location>
</feature>
<feature type="mutagenesis site" description="Strongly reduced interaction with flagellin." evidence="7">
    <original>QF</original>
    <variation>AA</variation>
    <location>
        <begin position="843"/>
        <end position="844"/>
    </location>
</feature>
<feature type="mutagenesis site" description="Strongly reduces production of IL1B in response to bacterial flagellin." evidence="8">
    <original>F</original>
    <variation>C</variation>
    <location>
        <position position="844"/>
    </location>
</feature>
<feature type="mutagenesis site" description="Strongly reduces production of IL1B in response to bacterial flagellin." evidence="8">
    <original>G</original>
    <variation>E</variation>
    <location>
        <position position="847"/>
    </location>
</feature>
<feature type="mutagenesis site" description="Nearly abolishes interaction with flagellin." evidence="7">
    <original>G</original>
    <variation>K</variation>
    <location>
        <position position="847"/>
    </location>
</feature>
<feature type="mutagenesis site" description="Strongly reduced interaction with flagellin." evidence="7">
    <original>LW</original>
    <variation>AA</variation>
    <location>
        <begin position="848"/>
        <end position="849"/>
    </location>
</feature>
<feature type="mutagenesis site" description="No effect on production of IL1B in response to bacterial flagellin." evidence="8">
    <original>S</original>
    <variation>Y</variation>
    <location>
        <position position="857"/>
    </location>
</feature>
<feature type="mutagenesis site" description="Strongly reduced interaction with flagellin." evidence="7">
    <original>YE</original>
    <variation>AA</variation>
    <location>
        <begin position="974"/>
        <end position="975"/>
    </location>
</feature>
<feature type="mutagenesis site" description="Reduced interaction with flagellin." evidence="7">
    <original>CR</original>
    <variation>AA</variation>
    <location>
        <begin position="1329"/>
        <end position="1330"/>
    </location>
</feature>
<feature type="mutagenesis site" description="Abolishes production of IL1B in response to bacterial flagellin." evidence="8">
    <location>
        <begin position="1390"/>
        <end position="1403"/>
    </location>
</feature>
<feature type="sequence conflict" description="In Ref. 2; AAD56760 and 6; AAC52974." ref="2 6">
    <original>R</original>
    <variation>K</variation>
    <location>
        <position position="92"/>
    </location>
</feature>
<feature type="sequence conflict" description="In Ref. 2; AAD56760 and 6; AAC52974." ref="2 6">
    <original>R</original>
    <variation>S</variation>
    <location>
        <position position="144"/>
    </location>
</feature>
<feature type="sequence conflict" description="In Ref. 2; AAD56760." evidence="11" ref="2">
    <original>S</original>
    <variation>G</variation>
    <location>
        <position position="242"/>
    </location>
</feature>
<feature type="sequence conflict" description="In Ref. 2; AAD56760." evidence="11" ref="2">
    <original>T</original>
    <variation>A</variation>
    <location>
        <position position="472"/>
    </location>
</feature>
<feature type="sequence conflict" description="In Ref. 2; AAD56760." evidence="11" ref="2">
    <original>A</original>
    <variation>D</variation>
    <location>
        <position position="516"/>
    </location>
</feature>
<feature type="sequence conflict" description="In Ref. 2; AAD56760." evidence="11" ref="2">
    <original>A</original>
    <variation>T</variation>
    <location>
        <position position="521"/>
    </location>
</feature>
<feature type="sequence conflict" description="In Ref. 2; AAD56760." evidence="11" ref="2">
    <original>V</original>
    <variation>A</variation>
    <location>
        <position position="533"/>
    </location>
</feature>
<feature type="sequence conflict" description="In Ref. 2; AAD56760." evidence="11" ref="2">
    <original>S</original>
    <variation>I</variation>
    <location>
        <position position="538"/>
    </location>
</feature>
<feature type="sequence conflict" description="In Ref. 2; AAD56760." evidence="11" ref="2">
    <original>E</original>
    <variation>D</variation>
    <location>
        <position position="1092"/>
    </location>
</feature>
<feature type="sequence conflict" description="In Ref. 1; AAD56764 and 2; AAD56760." ref="1 2">
    <original>N</original>
    <variation>D</variation>
    <location>
        <position position="1116"/>
    </location>
</feature>
<feature type="sequence conflict" description="In Ref. 1; AAD56764 and 2; AAD56760." ref="1 2">
    <original>R</original>
    <variation>G</variation>
    <location>
        <position position="1123"/>
    </location>
</feature>
<feature type="sequence conflict" description="In Ref. 1; AAD56764." ref="1">
    <original>L</original>
    <variation>H</variation>
    <location>
        <position position="1129"/>
    </location>
</feature>
<feature type="sequence conflict" description="In Ref. 1; AAD56764." ref="1">
    <original>Q</original>
    <variation>R</variation>
    <location>
        <position position="1137"/>
    </location>
</feature>
<feature type="sequence conflict" description="In Ref. 2; AAD56760." evidence="11" ref="2">
    <original>V</original>
    <variation>I</variation>
    <location>
        <position position="1242"/>
    </location>
</feature>
<feature type="sequence conflict" description="In Ref. 2; AAD56760." evidence="11" ref="2">
    <original>D</original>
    <variation>N</variation>
    <location>
        <position position="1276"/>
    </location>
</feature>
<feature type="turn" evidence="18">
    <location>
        <begin position="8"/>
        <end position="10"/>
    </location>
</feature>
<feature type="helix" evidence="18">
    <location>
        <begin position="17"/>
        <end position="19"/>
    </location>
</feature>
<feature type="helix" evidence="18">
    <location>
        <begin position="20"/>
        <end position="27"/>
    </location>
</feature>
<feature type="helix" evidence="18">
    <location>
        <begin position="33"/>
        <end position="48"/>
    </location>
</feature>
<feature type="helix" evidence="18">
    <location>
        <begin position="56"/>
        <end position="58"/>
    </location>
</feature>
<feature type="helix" evidence="18">
    <location>
        <begin position="60"/>
        <end position="65"/>
    </location>
</feature>
<feature type="turn" evidence="18">
    <location>
        <begin position="66"/>
        <end position="69"/>
    </location>
</feature>
<feature type="strand" evidence="17">
    <location>
        <begin position="74"/>
        <end position="76"/>
    </location>
</feature>
<feature type="helix" evidence="18">
    <location>
        <begin position="78"/>
        <end position="83"/>
    </location>
</feature>
<feature type="strand" evidence="17">
    <location>
        <begin position="86"/>
        <end position="88"/>
    </location>
</feature>
<feature type="strand" evidence="17">
    <location>
        <begin position="91"/>
        <end position="93"/>
    </location>
</feature>
<feature type="strand" evidence="18">
    <location>
        <begin position="95"/>
        <end position="97"/>
    </location>
</feature>
<feature type="turn" evidence="18">
    <location>
        <begin position="98"/>
        <end position="100"/>
    </location>
</feature>
<feature type="strand" evidence="18">
    <location>
        <begin position="109"/>
        <end position="112"/>
    </location>
</feature>
<feature type="helix" evidence="18">
    <location>
        <begin position="113"/>
        <end position="120"/>
    </location>
</feature>
<feature type="helix" evidence="18">
    <location>
        <begin position="125"/>
        <end position="128"/>
    </location>
</feature>
<feature type="strand" evidence="17">
    <location>
        <begin position="145"/>
        <end position="147"/>
    </location>
</feature>
<feature type="strand" evidence="18">
    <location>
        <begin position="153"/>
        <end position="155"/>
    </location>
</feature>
<feature type="helix" evidence="18">
    <location>
        <begin position="159"/>
        <end position="162"/>
    </location>
</feature>
<feature type="helix" evidence="18">
    <location>
        <begin position="163"/>
        <end position="168"/>
    </location>
</feature>
<feature type="helix" evidence="18">
    <location>
        <begin position="171"/>
        <end position="173"/>
    </location>
</feature>
<feature type="strand" evidence="17">
    <location>
        <begin position="174"/>
        <end position="176"/>
    </location>
</feature>
<feature type="helix" evidence="18">
    <location>
        <begin position="178"/>
        <end position="183"/>
    </location>
</feature>
<feature type="strand" evidence="17">
    <location>
        <begin position="185"/>
        <end position="188"/>
    </location>
</feature>
<feature type="strand" evidence="18">
    <location>
        <begin position="190"/>
        <end position="193"/>
    </location>
</feature>
<feature type="strand" evidence="17">
    <location>
        <begin position="195"/>
        <end position="197"/>
    </location>
</feature>
<feature type="turn" evidence="18">
    <location>
        <begin position="198"/>
        <end position="200"/>
    </location>
</feature>
<feature type="strand" evidence="17">
    <location>
        <begin position="202"/>
        <end position="204"/>
    </location>
</feature>
<feature type="helix" evidence="18">
    <location>
        <begin position="213"/>
        <end position="220"/>
    </location>
</feature>
<feature type="helix" evidence="18">
    <location>
        <begin position="225"/>
        <end position="230"/>
    </location>
</feature>
<feature type="helix" evidence="18">
    <location>
        <begin position="233"/>
        <end position="240"/>
    </location>
</feature>
<feature type="strand" evidence="17">
    <location>
        <begin position="242"/>
        <end position="246"/>
    </location>
</feature>
<feature type="helix" evidence="18">
    <location>
        <begin position="252"/>
        <end position="255"/>
    </location>
</feature>
<feature type="turn" evidence="18">
    <location>
        <begin position="266"/>
        <end position="272"/>
    </location>
</feature>
<feature type="strand" evidence="18">
    <location>
        <begin position="276"/>
        <end position="278"/>
    </location>
</feature>
<feature type="helix" evidence="18">
    <location>
        <begin position="279"/>
        <end position="281"/>
    </location>
</feature>
<feature type="helix" evidence="18">
    <location>
        <begin position="282"/>
        <end position="285"/>
    </location>
</feature>
<feature type="strand" evidence="18">
    <location>
        <begin position="292"/>
        <end position="294"/>
    </location>
</feature>
<feature type="turn" evidence="18">
    <location>
        <begin position="296"/>
        <end position="302"/>
    </location>
</feature>
<feature type="strand" evidence="17">
    <location>
        <begin position="308"/>
        <end position="311"/>
    </location>
</feature>
<feature type="strand" evidence="18">
    <location>
        <begin position="316"/>
        <end position="318"/>
    </location>
</feature>
<feature type="strand" evidence="18">
    <location>
        <begin position="326"/>
        <end position="328"/>
    </location>
</feature>
<feature type="turn" evidence="18">
    <location>
        <begin position="332"/>
        <end position="334"/>
    </location>
</feature>
<feature type="turn" evidence="17">
    <location>
        <begin position="339"/>
        <end position="343"/>
    </location>
</feature>
<feature type="helix" evidence="18">
    <location>
        <begin position="345"/>
        <end position="348"/>
    </location>
</feature>
<feature type="helix" evidence="18">
    <location>
        <begin position="398"/>
        <end position="411"/>
    </location>
</feature>
<feature type="helix" evidence="18">
    <location>
        <begin position="414"/>
        <end position="417"/>
    </location>
</feature>
<feature type="helix" evidence="18">
    <location>
        <begin position="425"/>
        <end position="427"/>
    </location>
</feature>
<feature type="turn" evidence="18">
    <location>
        <begin position="432"/>
        <end position="435"/>
    </location>
</feature>
<feature type="strand" evidence="18">
    <location>
        <begin position="440"/>
        <end position="443"/>
    </location>
</feature>
<feature type="strand" evidence="18">
    <location>
        <begin position="445"/>
        <end position="448"/>
    </location>
</feature>
<feature type="strand" evidence="18">
    <location>
        <begin position="450"/>
        <end position="452"/>
    </location>
</feature>
<feature type="helix" evidence="18">
    <location>
        <begin position="455"/>
        <end position="460"/>
    </location>
</feature>
<feature type="strand" evidence="18">
    <location>
        <begin position="463"/>
        <end position="465"/>
    </location>
</feature>
<feature type="strand" evidence="18">
    <location>
        <begin position="468"/>
        <end position="471"/>
    </location>
</feature>
<feature type="helix" evidence="18">
    <location>
        <begin position="476"/>
        <end position="486"/>
    </location>
</feature>
<feature type="strand" evidence="18">
    <location>
        <begin position="489"/>
        <end position="491"/>
    </location>
</feature>
<feature type="helix" evidence="18">
    <location>
        <begin position="493"/>
        <end position="495"/>
    </location>
</feature>
<feature type="strand" evidence="18">
    <location>
        <begin position="502"/>
        <end position="505"/>
    </location>
</feature>
<feature type="helix" evidence="18">
    <location>
        <begin position="506"/>
        <end position="508"/>
    </location>
</feature>
<feature type="helix" evidence="18">
    <location>
        <begin position="516"/>
        <end position="522"/>
    </location>
</feature>
<feature type="helix" evidence="18">
    <location>
        <begin position="525"/>
        <end position="527"/>
    </location>
</feature>
<feature type="turn" evidence="18">
    <location>
        <begin position="533"/>
        <end position="537"/>
    </location>
</feature>
<feature type="helix" evidence="18">
    <location>
        <begin position="538"/>
        <end position="541"/>
    </location>
</feature>
<feature type="strand" evidence="18">
    <location>
        <begin position="547"/>
        <end position="551"/>
    </location>
</feature>
<feature type="helix" evidence="17">
    <location>
        <begin position="556"/>
        <end position="558"/>
    </location>
</feature>
<feature type="turn" evidence="18">
    <location>
        <begin position="562"/>
        <end position="567"/>
    </location>
</feature>
<feature type="strand" evidence="17">
    <location>
        <begin position="571"/>
        <end position="573"/>
    </location>
</feature>
<feature type="strand" evidence="18">
    <location>
        <begin position="576"/>
        <end position="582"/>
    </location>
</feature>
<feature type="helix" evidence="18">
    <location>
        <begin position="583"/>
        <end position="586"/>
    </location>
</feature>
<feature type="helix" evidence="18">
    <location>
        <begin position="587"/>
        <end position="590"/>
    </location>
</feature>
<feature type="strand" evidence="18">
    <location>
        <begin position="594"/>
        <end position="599"/>
    </location>
</feature>
<feature type="helix" evidence="18">
    <location>
        <begin position="604"/>
        <end position="614"/>
    </location>
</feature>
<feature type="strand" evidence="18">
    <location>
        <begin position="616"/>
        <end position="618"/>
    </location>
</feature>
<feature type="helix" evidence="18">
    <location>
        <begin position="619"/>
        <end position="631"/>
    </location>
</feature>
<feature type="helix" evidence="18">
    <location>
        <begin position="633"/>
        <end position="638"/>
    </location>
</feature>
<feature type="helix" evidence="18">
    <location>
        <begin position="642"/>
        <end position="655"/>
    </location>
</feature>
<feature type="helix" evidence="18">
    <location>
        <begin position="664"/>
        <end position="678"/>
    </location>
</feature>
<feature type="turn" evidence="18">
    <location>
        <begin position="679"/>
        <end position="682"/>
    </location>
</feature>
<feature type="helix" evidence="18">
    <location>
        <begin position="683"/>
        <end position="701"/>
    </location>
</feature>
<feature type="turn" evidence="18">
    <location>
        <begin position="702"/>
        <end position="704"/>
    </location>
</feature>
<feature type="helix" evidence="18">
    <location>
        <begin position="710"/>
        <end position="716"/>
    </location>
</feature>
<feature type="helix" evidence="18">
    <location>
        <begin position="723"/>
        <end position="728"/>
    </location>
</feature>
<feature type="strand" evidence="18">
    <location>
        <begin position="730"/>
        <end position="737"/>
    </location>
</feature>
<feature type="strand" evidence="18">
    <location>
        <begin position="739"/>
        <end position="742"/>
    </location>
</feature>
<feature type="helix" evidence="18">
    <location>
        <begin position="748"/>
        <end position="761"/>
    </location>
</feature>
<feature type="helix" evidence="18">
    <location>
        <begin position="766"/>
        <end position="777"/>
    </location>
</feature>
<feature type="helix" evidence="18">
    <location>
        <begin position="782"/>
        <end position="786"/>
    </location>
</feature>
<feature type="turn" evidence="18">
    <location>
        <begin position="787"/>
        <end position="789"/>
    </location>
</feature>
<feature type="helix" evidence="18">
    <location>
        <begin position="790"/>
        <end position="798"/>
    </location>
</feature>
<feature type="helix" evidence="18">
    <location>
        <begin position="804"/>
        <end position="814"/>
    </location>
</feature>
<feature type="strand" evidence="18">
    <location>
        <begin position="815"/>
        <end position="819"/>
    </location>
</feature>
<feature type="helix" evidence="18">
    <location>
        <begin position="822"/>
        <end position="825"/>
    </location>
</feature>
<feature type="helix" evidence="18">
    <location>
        <begin position="829"/>
        <end position="832"/>
    </location>
</feature>
<feature type="helix" evidence="18">
    <location>
        <begin position="836"/>
        <end position="851"/>
    </location>
</feature>
<feature type="helix" evidence="18">
    <location>
        <begin position="853"/>
        <end position="874"/>
    </location>
</feature>
<feature type="helix" evidence="18">
    <location>
        <begin position="878"/>
        <end position="889"/>
    </location>
</feature>
<feature type="helix" evidence="18">
    <location>
        <begin position="897"/>
        <end position="900"/>
    </location>
</feature>
<feature type="helix" evidence="18">
    <location>
        <begin position="902"/>
        <end position="904"/>
    </location>
</feature>
<feature type="helix" evidence="18">
    <location>
        <begin position="908"/>
        <end position="912"/>
    </location>
</feature>
<feature type="strand" evidence="18">
    <location>
        <begin position="932"/>
        <end position="934"/>
    </location>
</feature>
<feature type="turn" evidence="18">
    <location>
        <begin position="935"/>
        <end position="937"/>
    </location>
</feature>
<feature type="strand" evidence="18">
    <location>
        <begin position="938"/>
        <end position="940"/>
    </location>
</feature>
<feature type="strand" evidence="18">
    <location>
        <begin position="948"/>
        <end position="950"/>
    </location>
</feature>
<feature type="strand" evidence="18">
    <location>
        <begin position="953"/>
        <end position="956"/>
    </location>
</feature>
<feature type="helix" evidence="18">
    <location>
        <begin position="957"/>
        <end position="976"/>
    </location>
</feature>
<feature type="strand" evidence="18">
    <location>
        <begin position="999"/>
        <end position="1001"/>
    </location>
</feature>
<feature type="helix" evidence="18">
    <location>
        <begin position="1014"/>
        <end position="1024"/>
    </location>
</feature>
<feature type="strand" evidence="18">
    <location>
        <begin position="1027"/>
        <end position="1036"/>
    </location>
</feature>
<feature type="helix" evidence="18">
    <location>
        <begin position="1040"/>
        <end position="1043"/>
    </location>
</feature>
<feature type="helix" evidence="18">
    <location>
        <begin position="1045"/>
        <end position="1050"/>
    </location>
</feature>
<feature type="strand" evidence="18">
    <location>
        <begin position="1055"/>
        <end position="1062"/>
    </location>
</feature>
<feature type="helix" evidence="18">
    <location>
        <begin position="1067"/>
        <end position="1074"/>
    </location>
</feature>
<feature type="strand" evidence="18">
    <location>
        <begin position="1083"/>
        <end position="1085"/>
    </location>
</feature>
<feature type="strand" evidence="18">
    <location>
        <begin position="1092"/>
        <end position="1095"/>
    </location>
</feature>
<feature type="turn" evidence="18">
    <location>
        <begin position="1117"/>
        <end position="1119"/>
    </location>
</feature>
<feature type="helix" evidence="18">
    <location>
        <begin position="1144"/>
        <end position="1146"/>
    </location>
</feature>
<feature type="strand" evidence="18">
    <location>
        <begin position="1147"/>
        <end position="1149"/>
    </location>
</feature>
<feature type="helix" evidence="18">
    <location>
        <begin position="1150"/>
        <end position="1152"/>
    </location>
</feature>
<feature type="helix" evidence="18">
    <location>
        <begin position="1170"/>
        <end position="1177"/>
    </location>
</feature>
<feature type="strand" evidence="18">
    <location>
        <begin position="1195"/>
        <end position="1198"/>
    </location>
</feature>
<feature type="strand" evidence="18">
    <location>
        <begin position="1200"/>
        <end position="1202"/>
    </location>
</feature>
<feature type="helix" evidence="18">
    <location>
        <begin position="1222"/>
        <end position="1225"/>
    </location>
</feature>
<feature type="turn" evidence="18">
    <location>
        <begin position="1226"/>
        <end position="1229"/>
    </location>
</feature>
<feature type="helix" evidence="18">
    <location>
        <begin position="1249"/>
        <end position="1259"/>
    </location>
</feature>
<feature type="strand" evidence="18">
    <location>
        <begin position="1275"/>
        <end position="1278"/>
    </location>
</feature>
<feature type="helix" evidence="18">
    <location>
        <begin position="1281"/>
        <end position="1284"/>
    </location>
</feature>
<feature type="strand" evidence="18">
    <location>
        <begin position="1285"/>
        <end position="1290"/>
    </location>
</feature>
<feature type="strand" evidence="18">
    <location>
        <begin position="1306"/>
        <end position="1308"/>
    </location>
</feature>
<feature type="helix" evidence="18">
    <location>
        <begin position="1310"/>
        <end position="1314"/>
    </location>
</feature>
<feature type="turn" evidence="18">
    <location>
        <begin position="1332"/>
        <end position="1334"/>
    </location>
</feature>
<feature type="helix" evidence="18">
    <location>
        <begin position="1338"/>
        <end position="1350"/>
    </location>
</feature>
<feature type="helix" evidence="18">
    <location>
        <begin position="1369"/>
        <end position="1378"/>
    </location>
</feature>
<feature type="turn" evidence="18">
    <location>
        <begin position="1382"/>
        <end position="1386"/>
    </location>
</feature>
<feature type="strand" evidence="18">
    <location>
        <begin position="1393"/>
        <end position="1397"/>
    </location>
</feature>
<name>BIR1E_MOUSE</name>
<gene>
    <name evidence="9 10" type="primary">Naip5</name>
    <name type="synonym">Birc1e</name>
    <name type="synonym">Naip-rs3</name>
</gene>
<evidence type="ECO:0000250" key="1">
    <source>
        <dbReference type="UniProtKB" id="Q13075"/>
    </source>
</evidence>
<evidence type="ECO:0000255" key="2">
    <source>
        <dbReference type="PROSITE-ProRule" id="PRU00029"/>
    </source>
</evidence>
<evidence type="ECO:0000255" key="3">
    <source>
        <dbReference type="PROSITE-ProRule" id="PRU00136"/>
    </source>
</evidence>
<evidence type="ECO:0000269" key="4">
    <source>
    </source>
</evidence>
<evidence type="ECO:0000269" key="5">
    <source>
    </source>
</evidence>
<evidence type="ECO:0000269" key="6">
    <source>
    </source>
</evidence>
<evidence type="ECO:0000269" key="7">
    <source>
    </source>
</evidence>
<evidence type="ECO:0000269" key="8">
    <source>
    </source>
</evidence>
<evidence type="ECO:0000303" key="9">
    <source>
    </source>
</evidence>
<evidence type="ECO:0000303" key="10">
    <source>
    </source>
</evidence>
<evidence type="ECO:0000305" key="11"/>
<evidence type="ECO:0000305" key="12">
    <source>
    </source>
</evidence>
<evidence type="ECO:0000312" key="13">
    <source>
        <dbReference type="EMBL" id="AAH70433.1"/>
    </source>
</evidence>
<evidence type="ECO:0000312" key="14">
    <source>
        <dbReference type="EMBL" id="AAN60211.1"/>
    </source>
</evidence>
<evidence type="ECO:0007744" key="15">
    <source>
        <dbReference type="PDB" id="5YUD"/>
    </source>
</evidence>
<evidence type="ECO:0007744" key="16">
    <source>
        <dbReference type="PDB" id="6B5B"/>
    </source>
</evidence>
<evidence type="ECO:0007829" key="17">
    <source>
        <dbReference type="PDB" id="7RAV"/>
    </source>
</evidence>
<evidence type="ECO:0007829" key="18">
    <source>
        <dbReference type="PDB" id="8FML"/>
    </source>
</evidence>
<reference key="1">
    <citation type="journal article" date="1999" name="Mamm. Genome">
        <title>The mouse Naip gene cluster on chromosome 13 encodes several distinct functional transcripts.</title>
        <authorList>
            <person name="Huang S."/>
            <person name="Scharf J.M."/>
            <person name="Growney J.D."/>
            <person name="Endrizzi M.G."/>
            <person name="Dietrich W.F."/>
        </authorList>
    </citation>
    <scope>NUCLEOTIDE SEQUENCE [MRNA]</scope>
</reference>
<reference key="2">
    <citation type="journal article" date="1999" name="Genomics">
        <title>Comparative sequence analysis of the mouse and human Lgn1/SMA interval.</title>
        <authorList>
            <person name="Endrizzi M."/>
            <person name="Huang S."/>
            <person name="Scharf J.M."/>
            <person name="Kelter A.R."/>
            <person name="Wirth B."/>
            <person name="Kunkel L.M."/>
            <person name="Miller W."/>
            <person name="Dietrich W.F."/>
        </authorList>
    </citation>
    <scope>NUCLEOTIDE SEQUENCE [GENOMIC DNA]</scope>
    <source>
        <strain>129/Sv</strain>
    </source>
</reference>
<reference evidence="14" key="3">
    <citation type="journal article" date="2003" name="Curr. Biol.">
        <title>Naip5 affects host susceptibility to the intracellular pathogen Legionella pneumophila.</title>
        <authorList>
            <person name="Wright E.K."/>
            <person name="Goodart S.A."/>
            <person name="Growney J.D."/>
            <person name="Hadinoto V."/>
            <person name="Endrizzi M.G."/>
            <person name="Long E.M."/>
            <person name="Sadigh K."/>
            <person name="Abney A.L."/>
            <person name="Bernstein-Hanley I."/>
            <person name="Dietrich W.F."/>
        </authorList>
    </citation>
    <scope>NUCLEOTIDE SEQUENCE [MRNA]</scope>
    <scope>FUNCTION</scope>
    <source>
        <strain evidence="14">P/J</strain>
    </source>
</reference>
<reference key="4">
    <citation type="journal article" date="2009" name="PLoS Biol.">
        <title>Lineage-specific biology revealed by a finished genome assembly of the mouse.</title>
        <authorList>
            <person name="Church D.M."/>
            <person name="Goodstadt L."/>
            <person name="Hillier L.W."/>
            <person name="Zody M.C."/>
            <person name="Goldstein S."/>
            <person name="She X."/>
            <person name="Bult C.J."/>
            <person name="Agarwala R."/>
            <person name="Cherry J.L."/>
            <person name="DiCuccio M."/>
            <person name="Hlavina W."/>
            <person name="Kapustin Y."/>
            <person name="Meric P."/>
            <person name="Maglott D."/>
            <person name="Birtle Z."/>
            <person name="Marques A.C."/>
            <person name="Graves T."/>
            <person name="Zhou S."/>
            <person name="Teague B."/>
            <person name="Potamousis K."/>
            <person name="Churas C."/>
            <person name="Place M."/>
            <person name="Herschleb J."/>
            <person name="Runnheim R."/>
            <person name="Forrest D."/>
            <person name="Amos-Landgraf J."/>
            <person name="Schwartz D.C."/>
            <person name="Cheng Z."/>
            <person name="Lindblad-Toh K."/>
            <person name="Eichler E.E."/>
            <person name="Ponting C.P."/>
        </authorList>
    </citation>
    <scope>NUCLEOTIDE SEQUENCE [LARGE SCALE GENOMIC DNA]</scope>
    <source>
        <strain>C57BL/6J</strain>
    </source>
</reference>
<reference key="5">
    <citation type="journal article" date="2004" name="Genome Res.">
        <title>The status, quality, and expansion of the NIH full-length cDNA project: the Mammalian Gene Collection (MGC).</title>
        <authorList>
            <consortium name="The MGC Project Team"/>
        </authorList>
    </citation>
    <scope>NUCLEOTIDE SEQUENCE [LARGE SCALE MRNA]</scope>
    <source>
        <strain evidence="13">C57BL/6J</strain>
        <tissue evidence="13">Brain</tissue>
    </source>
</reference>
<reference key="6">
    <citation type="journal article" date="1996" name="Genomics">
        <title>The mouse region syntenic for human spinal muscular atrophy lies within the Lgn1 critical interval and contains multiple copies of Naip exon 5.</title>
        <authorList>
            <person name="Scharf J.M."/>
            <person name="Damron D."/>
            <person name="Frisella A."/>
            <person name="Bruno S."/>
            <person name="Beggs A.H."/>
            <person name="Kunkel L.M."/>
            <person name="Dietrich W.F."/>
        </authorList>
    </citation>
    <scope>NUCLEOTIDE SEQUENCE [GENOMIC DNA] OF 82-168</scope>
    <source>
        <strain>129/SvJ</strain>
    </source>
</reference>
<reference key="7">
    <citation type="journal article" date="2011" name="Nature">
        <title>Innate immune recognition of bacterial ligands by NAIPs determines inflammasome specificity.</title>
        <authorList>
            <person name="Kofoed E.M."/>
            <person name="Vance R.E."/>
        </authorList>
    </citation>
    <scope>FUNCTION</scope>
    <scope>SUBUNIT</scope>
    <scope>INTERACTION WITH S.TYPHIMURIUM FLAGELLIN</scope>
</reference>
<reference key="8">
    <citation type="journal article" date="2011" name="Nature">
        <title>The NLRC4 inflammasome receptors for bacterial flagellin and type III secretion apparatus.</title>
        <authorList>
            <person name="Zhao Y."/>
            <person name="Yang J."/>
            <person name="Shi J."/>
            <person name="Gong Y.N."/>
            <person name="Lu Q."/>
            <person name="Xu H."/>
            <person name="Liu L."/>
            <person name="Shao F."/>
        </authorList>
    </citation>
    <scope>FUNCTION</scope>
    <scope>SUBUNIT</scope>
    <scope>INTERACTION WITH S.TYPHIMURIUM FLAGELLIN</scope>
</reference>
<reference key="9">
    <citation type="journal article" date="2008" name="Cell Cycle">
        <title>IAPs: more than just inhibitors of apoptosis proteins.</title>
        <authorList>
            <person name="Dubrez-Daloz L."/>
            <person name="Dupoux A."/>
            <person name="Cartier J."/>
        </authorList>
    </citation>
    <scope>REVIEW ON FUNCTION</scope>
</reference>
<reference evidence="16" key="10">
    <citation type="journal article" date="2017" name="Science">
        <title>The structural basis of flagellin detection by NAIP5: A strategy to limit pathogen immune evasion.</title>
        <authorList>
            <person name="Tenthorey J.L."/>
            <person name="Haloupek N."/>
            <person name="Lopez-Blanco J.R."/>
            <person name="Grob P."/>
            <person name="Adamson E."/>
            <person name="Hartenian E."/>
            <person name="Lind N.A."/>
            <person name="Bourgeois N.M."/>
            <person name="Chacon P."/>
            <person name="Nogales E."/>
            <person name="Vance R.E."/>
        </authorList>
    </citation>
    <scope>STRUCTURE BY ELECTRON MICROSCOPY (5.20 ANGSTROMS) IN COMPLEX WITH NLRC4 AND L.PNEUMOPHILA FLAGELLIN</scope>
    <scope>FUNCTION</scope>
    <scope>SUBUNIT</scope>
    <scope>MUTAGENESIS OF 626-ILE-ILE-627; 837-GLN-THR-838; 839-PHE-LEU-840; 841-TRP-PHE-842; 843-GLN-PHE-844; GLY-847; 848-LEU-TRP-849; 974-TYR-GLU-975 AND 1329-CYS-ARG-1330</scope>
</reference>
<reference evidence="15" key="11">
    <citation type="journal article" date="2018" name="Cell Res.">
        <title>Structural basis for specific flagellin recognition by the NLR protein NAIP5.</title>
        <authorList>
            <person name="Yang X."/>
            <person name="Yang F."/>
            <person name="Wang W."/>
            <person name="Lin G."/>
            <person name="Hu Z."/>
            <person name="Han Z."/>
            <person name="Qi Y."/>
            <person name="Zhang L."/>
            <person name="Wang J."/>
            <person name="Sui S.F."/>
            <person name="Chai J."/>
        </authorList>
    </citation>
    <scope>STRUCTURE BY ELECTRON MICROSCOPY (4.28 ANGSTROMS) IN COMPLEX WITH ATP AND S.TYPHIMURIUM FLAGELLIN</scope>
    <scope>FUNCTION</scope>
    <scope>SUBUNIT</scope>
    <scope>MUTAGENESIS OF 1-MET--GLU-40; ARG-11; ILE-15; 106-GLY--SER-108; LEU-840; PHE-844; GLY-847; SER-857 AND 1390-PHE--GLU-1403</scope>
</reference>
<proteinExistence type="evidence at protein level"/>
<dbReference type="EMBL" id="AF135492">
    <property type="protein sequence ID" value="AAD56764.1"/>
    <property type="molecule type" value="mRNA"/>
</dbReference>
<dbReference type="EMBL" id="AF131205">
    <property type="protein sequence ID" value="AAD56760.1"/>
    <property type="molecule type" value="Genomic_DNA"/>
</dbReference>
<dbReference type="EMBL" id="AY146999">
    <property type="protein sequence ID" value="AAN60211.1"/>
    <property type="molecule type" value="mRNA"/>
</dbReference>
<dbReference type="EMBL" id="CT009518">
    <property type="status" value="NOT_ANNOTATED_CDS"/>
    <property type="molecule type" value="Genomic_DNA"/>
</dbReference>
<dbReference type="EMBL" id="CT030167">
    <property type="status" value="NOT_ANNOTATED_CDS"/>
    <property type="molecule type" value="Genomic_DNA"/>
</dbReference>
<dbReference type="EMBL" id="BC070433">
    <property type="protein sequence ID" value="AAH70433.1"/>
    <property type="molecule type" value="mRNA"/>
</dbReference>
<dbReference type="EMBL" id="U66326">
    <property type="protein sequence ID" value="AAC52974.1"/>
    <property type="molecule type" value="Genomic_DNA"/>
</dbReference>
<dbReference type="CCDS" id="CCDS26727.1"/>
<dbReference type="RefSeq" id="NP_001413193.1">
    <property type="nucleotide sequence ID" value="NM_001426264.1"/>
</dbReference>
<dbReference type="RefSeq" id="NP_035000.2">
    <property type="nucleotide sequence ID" value="NM_010870.3"/>
</dbReference>
<dbReference type="RefSeq" id="XP_011242930.1">
    <property type="nucleotide sequence ID" value="XM_011244628.1"/>
</dbReference>
<dbReference type="RefSeq" id="XP_017170904.1">
    <property type="nucleotide sequence ID" value="XM_017315415.3"/>
</dbReference>
<dbReference type="PDB" id="5YUD">
    <property type="method" value="EM"/>
    <property type="resolution" value="4.28 A"/>
    <property type="chains" value="A=1-1403"/>
</dbReference>
<dbReference type="PDB" id="6B5B">
    <property type="method" value="EM"/>
    <property type="resolution" value="5.20 A"/>
    <property type="chains" value="A=1-1403"/>
</dbReference>
<dbReference type="PDB" id="7RAV">
    <property type="method" value="EM"/>
    <property type="resolution" value="3.30 A"/>
    <property type="chains" value="A=2-1403"/>
</dbReference>
<dbReference type="PDB" id="8FML">
    <property type="method" value="EM"/>
    <property type="resolution" value="2.93 A"/>
    <property type="chains" value="A=2-1403"/>
</dbReference>
<dbReference type="PDBsum" id="5YUD"/>
<dbReference type="PDBsum" id="6B5B"/>
<dbReference type="PDBsum" id="7RAV"/>
<dbReference type="PDBsum" id="8FML"/>
<dbReference type="EMDB" id="EMD-24387"/>
<dbReference type="EMDB" id="EMD-2901"/>
<dbReference type="EMDB" id="EMD-29296"/>
<dbReference type="EMDB" id="EMD-6845"/>
<dbReference type="EMDB" id="EMD-7055"/>
<dbReference type="SMR" id="Q9R016"/>
<dbReference type="CORUM" id="Q9R016"/>
<dbReference type="DIP" id="DIP-59148N"/>
<dbReference type="FunCoup" id="Q9R016">
    <property type="interactions" value="27"/>
</dbReference>
<dbReference type="IntAct" id="Q9R016">
    <property type="interactions" value="8"/>
</dbReference>
<dbReference type="STRING" id="10090.ENSMUSP00000058611"/>
<dbReference type="MEROPS" id="I32.001"/>
<dbReference type="iPTMnet" id="Q9R016"/>
<dbReference type="PhosphoSitePlus" id="Q9R016"/>
<dbReference type="jPOST" id="Q9R016"/>
<dbReference type="PaxDb" id="10090-ENSMUSP00000058611"/>
<dbReference type="ProteomicsDB" id="273675"/>
<dbReference type="ProteomicsDB" id="344822"/>
<dbReference type="DNASU" id="17951"/>
<dbReference type="Ensembl" id="ENSMUST00000049789.3">
    <property type="protein sequence ID" value="ENSMUSP00000058611.3"/>
    <property type="gene ID" value="ENSMUSG00000071203.7"/>
</dbReference>
<dbReference type="GeneID" id="17951"/>
<dbReference type="KEGG" id="mmu:17951"/>
<dbReference type="UCSC" id="uc007rql.1">
    <property type="organism name" value="mouse"/>
</dbReference>
<dbReference type="AGR" id="MGI:1298220"/>
<dbReference type="CTD" id="17951"/>
<dbReference type="MGI" id="MGI:1298220">
    <property type="gene designation" value="Naip5"/>
</dbReference>
<dbReference type="VEuPathDB" id="HostDB:ENSMUSG00000071203"/>
<dbReference type="eggNOG" id="KOG1101">
    <property type="taxonomic scope" value="Eukaryota"/>
</dbReference>
<dbReference type="GeneTree" id="ENSGT00940000163369"/>
<dbReference type="HOGENOM" id="CLU_005648_0_0_1"/>
<dbReference type="InParanoid" id="Q9R016"/>
<dbReference type="OMA" id="FENWPFY"/>
<dbReference type="OrthoDB" id="4034597at2759"/>
<dbReference type="PhylomeDB" id="Q9R016"/>
<dbReference type="TreeFam" id="TF105356"/>
<dbReference type="BioGRID-ORCS" id="17951">
    <property type="hits" value="2 hits in 75 CRISPR screens"/>
</dbReference>
<dbReference type="ChiTaRS" id="Naip5">
    <property type="organism name" value="mouse"/>
</dbReference>
<dbReference type="PRO" id="PR:Q9R016"/>
<dbReference type="Proteomes" id="UP000000589">
    <property type="component" value="Chromosome 13"/>
</dbReference>
<dbReference type="RNAct" id="Q9R016">
    <property type="molecule type" value="protein"/>
</dbReference>
<dbReference type="Bgee" id="ENSMUSG00000071203">
    <property type="expression patterns" value="Expressed in intestinal villus and 77 other cell types or tissues"/>
</dbReference>
<dbReference type="GO" id="GO:0072557">
    <property type="term" value="C:IPAF inflammasome complex"/>
    <property type="evidence" value="ECO:0000314"/>
    <property type="project" value="UniProtKB"/>
</dbReference>
<dbReference type="GO" id="GO:0005524">
    <property type="term" value="F:ATP binding"/>
    <property type="evidence" value="ECO:0000314"/>
    <property type="project" value="UniProtKB"/>
</dbReference>
<dbReference type="GO" id="GO:0043027">
    <property type="term" value="F:cysteine-type endopeptidase inhibitor activity involved in apoptotic process"/>
    <property type="evidence" value="ECO:0007669"/>
    <property type="project" value="InterPro"/>
</dbReference>
<dbReference type="GO" id="GO:0046872">
    <property type="term" value="F:metal ion binding"/>
    <property type="evidence" value="ECO:0007669"/>
    <property type="project" value="UniProtKB-KW"/>
</dbReference>
<dbReference type="GO" id="GO:0006915">
    <property type="term" value="P:apoptotic process"/>
    <property type="evidence" value="ECO:0007669"/>
    <property type="project" value="UniProtKB-KW"/>
</dbReference>
<dbReference type="GO" id="GO:0042742">
    <property type="term" value="P:defense response to bacterium"/>
    <property type="evidence" value="ECO:0000315"/>
    <property type="project" value="UniProtKB"/>
</dbReference>
<dbReference type="GO" id="GO:0050829">
    <property type="term" value="P:defense response to Gram-negative bacterium"/>
    <property type="evidence" value="ECO:0000315"/>
    <property type="project" value="UniProtKB"/>
</dbReference>
<dbReference type="GO" id="GO:0016045">
    <property type="term" value="P:detection of bacterium"/>
    <property type="evidence" value="ECO:0000315"/>
    <property type="project" value="UniProtKB"/>
</dbReference>
<dbReference type="GO" id="GO:0006954">
    <property type="term" value="P:inflammatory response"/>
    <property type="evidence" value="ECO:0000315"/>
    <property type="project" value="UniProtKB"/>
</dbReference>
<dbReference type="GO" id="GO:0045087">
    <property type="term" value="P:innate immune response"/>
    <property type="evidence" value="ECO:0007669"/>
    <property type="project" value="UniProtKB-KW"/>
</dbReference>
<dbReference type="GO" id="GO:0043066">
    <property type="term" value="P:negative regulation of apoptotic process"/>
    <property type="evidence" value="ECO:0007669"/>
    <property type="project" value="InterPro"/>
</dbReference>
<dbReference type="GO" id="GO:0032731">
    <property type="term" value="P:positive regulation of interleukin-1 beta production"/>
    <property type="evidence" value="ECO:0000314"/>
    <property type="project" value="UniProtKB"/>
</dbReference>
<dbReference type="GO" id="GO:0070269">
    <property type="term" value="P:pyroptotic inflammatory response"/>
    <property type="evidence" value="ECO:0000315"/>
    <property type="project" value="UniProtKB"/>
</dbReference>
<dbReference type="GO" id="GO:0046718">
    <property type="term" value="P:symbiont entry into host cell"/>
    <property type="evidence" value="ECO:0000314"/>
    <property type="project" value="MGI"/>
</dbReference>
<dbReference type="CDD" id="cd00022">
    <property type="entry name" value="BIR"/>
    <property type="match status" value="3"/>
</dbReference>
<dbReference type="FunFam" id="1.10.1170.10:FF:000007">
    <property type="entry name" value="Baculoviral IAP repeat-containing protein 1"/>
    <property type="match status" value="2"/>
</dbReference>
<dbReference type="FunFam" id="1.10.1170.10:FF:000013">
    <property type="entry name" value="Baculoviral IAP repeat-containing protein 1"/>
    <property type="match status" value="1"/>
</dbReference>
<dbReference type="FunFam" id="3.40.50.300:FF:001126">
    <property type="entry name" value="Baculoviral IAP repeat-containing protein 1"/>
    <property type="match status" value="1"/>
</dbReference>
<dbReference type="FunFam" id="3.80.10.10:FF:000316">
    <property type="entry name" value="Baculoviral IAP repeat-containing protein 1"/>
    <property type="match status" value="1"/>
</dbReference>
<dbReference type="Gene3D" id="1.10.1170.10">
    <property type="entry name" value="Inhibitor Of Apoptosis Protein (2mihbC-IAP-1), Chain A"/>
    <property type="match status" value="3"/>
</dbReference>
<dbReference type="Gene3D" id="3.40.50.300">
    <property type="entry name" value="P-loop containing nucleotide triphosphate hydrolases"/>
    <property type="match status" value="1"/>
</dbReference>
<dbReference type="Gene3D" id="3.80.10.10">
    <property type="entry name" value="Ribonuclease Inhibitor"/>
    <property type="match status" value="1"/>
</dbReference>
<dbReference type="InterPro" id="IPR001370">
    <property type="entry name" value="BIR_rpt"/>
</dbReference>
<dbReference type="InterPro" id="IPR032675">
    <property type="entry name" value="LRR_dom_sf"/>
</dbReference>
<dbReference type="InterPro" id="IPR007111">
    <property type="entry name" value="NACHT_NTPase"/>
</dbReference>
<dbReference type="InterPro" id="IPR028789">
    <property type="entry name" value="Naip"/>
</dbReference>
<dbReference type="InterPro" id="IPR053882">
    <property type="entry name" value="Nlrc4-like_WHD"/>
</dbReference>
<dbReference type="InterPro" id="IPR040535">
    <property type="entry name" value="NLRC4_HD"/>
</dbReference>
<dbReference type="InterPro" id="IPR027417">
    <property type="entry name" value="P-loop_NTPase"/>
</dbReference>
<dbReference type="PANTHER" id="PTHR46914">
    <property type="entry name" value="BACULOVIRAL IAP REPEAT-CONTAINING PROTEIN 1"/>
    <property type="match status" value="1"/>
</dbReference>
<dbReference type="PANTHER" id="PTHR46914:SF1">
    <property type="entry name" value="BACULOVIRAL IAP REPEAT-CONTAINING PROTEIN 1"/>
    <property type="match status" value="1"/>
</dbReference>
<dbReference type="Pfam" id="PF00653">
    <property type="entry name" value="BIR"/>
    <property type="match status" value="3"/>
</dbReference>
<dbReference type="Pfam" id="PF05729">
    <property type="entry name" value="NACHT"/>
    <property type="match status" value="1"/>
</dbReference>
<dbReference type="Pfam" id="PF22524">
    <property type="entry name" value="Nlrc4-like_WHD"/>
    <property type="match status" value="1"/>
</dbReference>
<dbReference type="Pfam" id="PF17889">
    <property type="entry name" value="NLRC4_HD"/>
    <property type="match status" value="1"/>
</dbReference>
<dbReference type="SMART" id="SM00238">
    <property type="entry name" value="BIR"/>
    <property type="match status" value="3"/>
</dbReference>
<dbReference type="SUPFAM" id="SSF57924">
    <property type="entry name" value="Inhibitor of apoptosis (IAP) repeat"/>
    <property type="match status" value="3"/>
</dbReference>
<dbReference type="SUPFAM" id="SSF52540">
    <property type="entry name" value="P-loop containing nucleoside triphosphate hydrolases"/>
    <property type="match status" value="1"/>
</dbReference>
<dbReference type="SUPFAM" id="SSF52047">
    <property type="entry name" value="RNI-like"/>
    <property type="match status" value="1"/>
</dbReference>
<dbReference type="PROSITE" id="PS01282">
    <property type="entry name" value="BIR_REPEAT_1"/>
    <property type="match status" value="2"/>
</dbReference>
<dbReference type="PROSITE" id="PS50143">
    <property type="entry name" value="BIR_REPEAT_2"/>
    <property type="match status" value="3"/>
</dbReference>
<dbReference type="PROSITE" id="PS50837">
    <property type="entry name" value="NACHT"/>
    <property type="match status" value="1"/>
</dbReference>
<comment type="function">
    <text evidence="1 4 5 6 7 8">Sensor component of the NLRC4 inflammasome that specifically recognizes and binds flagellin from pathogenic bacteria such as Legionella or Salmonella (PubMed:12526741, PubMed:21874021, PubMed:21918512, PubMed:29146805, PubMed:29182158). Association of pathogenic bacteria proteins drives in turn drive assembly and activation of the NLRC4 inflammasome, promoting caspase-1 activation, cytokine production and macrophage pyroptosis (PubMed:21874021, PubMed:21918512, PubMed:29146805, PubMed:29182158). The NLRC4 inflammasome is activated as part of the innate immune response to a range of intracellular bacteria. The NLRC4 inflammasome senses Gram-negative bacteria such as L.pneumophila and P.aeruginosa, enteric pathogens S.typhimurium (Salmonella) and S.flexneri (PubMed:21874021, PubMed:21918512, PubMed:29146805, PubMed:29182158). May contribute to prevent motor-neuron apoptosis induced by a variety of signals (By similarity).</text>
</comment>
<comment type="subunit">
    <text evidence="5 6 7 8">Component of the NLRC4 inflammasome, at least composed of NLRC4, caspase-1 (CASP1) and some NAIP protein. Flagellin binding by NAIP5 triggers assembly of the inflammasome, a huge complex that contains a single NAIP5 chain and multiple copies of NLRC4 (PubMed:29182158).</text>
</comment>
<comment type="subunit">
    <text evidence="5 6 8">(Microbial infection) Interacts with S.typhimurium (Salmonella) flagellin.</text>
</comment>
<comment type="subunit">
    <text evidence="7">(Microbial infection) Interacts with L.pneumophila flagellin.</text>
</comment>
<comment type="interaction">
    <interactant intactId="EBI-15944130">
        <id>Q9R016</id>
    </interactant>
    <interactant intactId="EBI-16006652">
        <id>Q3UP24</id>
        <label>Nlrc4</label>
    </interactant>
    <organismsDiffer>false</organismsDiffer>
    <experiments>18</experiments>
</comment>
<comment type="interaction">
    <interactant intactId="EBI-15944130">
        <id>Q9R016</id>
    </interactant>
    <interactant intactId="EBI-15944232">
        <id>Q48824</id>
        <label>flaA</label>
    </interactant>
    <organismsDiffer>true</organismsDiffer>
    <experiments>2</experiments>
</comment>
<comment type="interaction">
    <interactant intactId="EBI-15944130">
        <id>Q9R016</id>
    </interactant>
    <interactant intactId="EBI-2011501">
        <id>P06179</id>
        <label>fliC</label>
    </interactant>
    <organismsDiffer>true</organismsDiffer>
    <experiments>9</experiments>
</comment>
<comment type="tissue specificity">
    <text evidence="4">Detected in macrophages (at protein level).</text>
</comment>
<comment type="polymorphism">
    <text evidence="4">Part of the Lgn1 locus that determines susceptibility to the intracellular pathogen L.pneumophila. Susceptibility differs between inbred mouse strains. Strain C57BL/6J is not permissive, i.e. L.pneumophila cannot multiply in C57BL/6J macrophages, contrary to the situation in mouse strain A/J. Strain FVB/NJ macrophages display intermediate permissiveness for intracellular proliferation of L.pneumophila.</text>
</comment>
<sequence>MAEHGESSEDRISEIDYEFLPELSALLGVDAFQVAKSQEEEEHKERMKMKKGFNSQMRSEAKRLKTFETYDTFRSWTPQEMAAAGFYHTGVRLGVQCFCCSLILFGNSLRKLPIERHKKLRPECEFLQGKDVGNIGKYDIRVKRPEKMLRGGKARYHEEEARLESFEDWPFYAHGTSPRVLSAAGFVFTGKRDTVQCFSCGGSLGNWEEGDDPWKEHAKWFPKCEFLQSKKSSEEIAQYIQSYEGFVHVTGEHFVKSWVRRELPMVSAYCNDSVFANEELRMDMFKDWPQESPVGVEALVRAGFFYTGKKDIVRCFSCGGCLEKWAEGDDPMEDHIKFFPECVFLQTLKSSAEVIPTLQSQYALPEATETTRESNHGDAAAVHSTVVDLGRSEAQWFQEARSLSEQLRDNYTKATFRHMNLPEVCSSLGTDHLLSCDVSIISKHISQPVQEALTIPEVFSNLNSVMCVEGETGSGKTTFLKRIAFLWASGCCPLLYRFQLVFYLSLSSITPDQGLANIICAQLLGAGGCISEVCLSSSIQQLQHQVLFLLDDYSGLASLPQALHTLITKNYLSRTCLLIAVHTNRVRDIRLYLGTSLEIQEFPFYNTVSVLRKFFSHDIICVEKLIIYFIDNKDLQGVYKTPLFVAAVCTDWIQNASAQDKFQDVTLFQSYMQYLSLKYKATAEPLQATVSSCGQLALTGLFSSCFEFNSDDLAEAGVDEDEKLTTLLMSKFTAQRLRPVYRFLGPLFQEFLAAVRLTELLSSDRQEDQDLGLYYLRQIDSPLKAINSFNIFLYYVSSHSSSKAAPTVVSHLLQLVDEKESLENMSENEDYMKLHPQTFLWFQFVRGLWLVSPESSSSFVSEHLLRLALIFAYESNTVAECSPFILQFLRGKTLALRVLNLQYFRDHPESLLLLRSLKVSINGNKMSSYVDYSFKTYFENLQPPAIDEEYTSAFEHISEWRRNFAQDEEIIKNYENIRPRALPDISEGYWKLSPKPCKIPKLEVQVNNTDAADQALLQVLMEVFSASQSIEFRLFNSSGFLESICPALELSKASVTKCSMSRLELSRAEQELLLTLPALQSLEVSETNQLPEQLFHNLHKFLGLKELCVRLDGKPNVLSVLPREFPNLLHMEKLSIQTSTESDLSKLVKFIQNFPNLHVFHLKCDFLSNCESLMAVLASCKKLREIEFSGRCFEAMTFVNILPNFVSLKILNLKDQQFPDKETSEKFAQALGSLRNLEELLVPTGDGIHQVAKLIVRQCLQLPCLRVLTFHDILDDDSVIEIARAATSGGFQKLENLDISMNHKITEEGYRNFFQALDNLPNLQELNICRNIPGRIQVQATTVKALGQCVSRLPSLIRLHMLSWLLDEEDMKVINDVKERHPQSKRLIIFWKLIVPFSPVILE</sequence>
<protein>
    <recommendedName>
        <fullName>Baculoviral IAP repeat-containing protein 1e</fullName>
    </recommendedName>
    <alternativeName>
        <fullName>Neuronal apoptosis inhibitory protein 5</fullName>
    </alternativeName>
</protein>
<keyword id="KW-0002">3D-structure</keyword>
<keyword id="KW-0053">Apoptosis</keyword>
<keyword id="KW-0067">ATP-binding</keyword>
<keyword id="KW-0391">Immunity</keyword>
<keyword id="KW-0395">Inflammatory response</keyword>
<keyword id="KW-0399">Innate immunity</keyword>
<keyword id="KW-0479">Metal-binding</keyword>
<keyword id="KW-0547">Nucleotide-binding</keyword>
<keyword id="KW-1185">Reference proteome</keyword>
<keyword id="KW-0677">Repeat</keyword>
<keyword id="KW-0862">Zinc</keyword>